<feature type="chain" id="PRO_1000081479" description="Large ribosomal subunit protein bL9">
    <location>
        <begin position="1"/>
        <end position="146"/>
    </location>
</feature>
<evidence type="ECO:0000255" key="1">
    <source>
        <dbReference type="HAMAP-Rule" id="MF_00503"/>
    </source>
</evidence>
<evidence type="ECO:0000305" key="2"/>
<proteinExistence type="inferred from homology"/>
<gene>
    <name evidence="1" type="primary">rplI</name>
    <name type="ordered locus">Fjoh_3480</name>
</gene>
<comment type="function">
    <text evidence="1">Binds to the 23S rRNA.</text>
</comment>
<comment type="similarity">
    <text evidence="1">Belongs to the bacterial ribosomal protein bL9 family.</text>
</comment>
<name>RL9_FLAJ1</name>
<dbReference type="EMBL" id="CP000685">
    <property type="protein sequence ID" value="ABQ06494.1"/>
    <property type="molecule type" value="Genomic_DNA"/>
</dbReference>
<dbReference type="RefSeq" id="WP_012025463.1">
    <property type="nucleotide sequence ID" value="NZ_MUGZ01000010.1"/>
</dbReference>
<dbReference type="SMR" id="A5FE75"/>
<dbReference type="STRING" id="376686.Fjoh_3480"/>
<dbReference type="KEGG" id="fjo:Fjoh_3480"/>
<dbReference type="eggNOG" id="COG0359">
    <property type="taxonomic scope" value="Bacteria"/>
</dbReference>
<dbReference type="HOGENOM" id="CLU_078938_3_0_10"/>
<dbReference type="OrthoDB" id="9788336at2"/>
<dbReference type="Proteomes" id="UP000006694">
    <property type="component" value="Chromosome"/>
</dbReference>
<dbReference type="GO" id="GO:1990904">
    <property type="term" value="C:ribonucleoprotein complex"/>
    <property type="evidence" value="ECO:0007669"/>
    <property type="project" value="UniProtKB-KW"/>
</dbReference>
<dbReference type="GO" id="GO:0005840">
    <property type="term" value="C:ribosome"/>
    <property type="evidence" value="ECO:0007669"/>
    <property type="project" value="UniProtKB-KW"/>
</dbReference>
<dbReference type="GO" id="GO:0019843">
    <property type="term" value="F:rRNA binding"/>
    <property type="evidence" value="ECO:0007669"/>
    <property type="project" value="UniProtKB-UniRule"/>
</dbReference>
<dbReference type="GO" id="GO:0003735">
    <property type="term" value="F:structural constituent of ribosome"/>
    <property type="evidence" value="ECO:0007669"/>
    <property type="project" value="InterPro"/>
</dbReference>
<dbReference type="GO" id="GO:0006412">
    <property type="term" value="P:translation"/>
    <property type="evidence" value="ECO:0007669"/>
    <property type="project" value="UniProtKB-UniRule"/>
</dbReference>
<dbReference type="Gene3D" id="3.10.430.100">
    <property type="entry name" value="Ribosomal protein L9, C-terminal domain"/>
    <property type="match status" value="1"/>
</dbReference>
<dbReference type="Gene3D" id="3.40.5.10">
    <property type="entry name" value="Ribosomal protein L9, N-terminal domain"/>
    <property type="match status" value="1"/>
</dbReference>
<dbReference type="HAMAP" id="MF_00503">
    <property type="entry name" value="Ribosomal_bL9"/>
    <property type="match status" value="1"/>
</dbReference>
<dbReference type="InterPro" id="IPR000244">
    <property type="entry name" value="Ribosomal_bL9"/>
</dbReference>
<dbReference type="InterPro" id="IPR009027">
    <property type="entry name" value="Ribosomal_bL9/RNase_H1_N"/>
</dbReference>
<dbReference type="InterPro" id="IPR020594">
    <property type="entry name" value="Ribosomal_bL9_bac/chp"/>
</dbReference>
<dbReference type="InterPro" id="IPR020069">
    <property type="entry name" value="Ribosomal_bL9_C"/>
</dbReference>
<dbReference type="InterPro" id="IPR036791">
    <property type="entry name" value="Ribosomal_bL9_C_sf"/>
</dbReference>
<dbReference type="InterPro" id="IPR020070">
    <property type="entry name" value="Ribosomal_bL9_N"/>
</dbReference>
<dbReference type="InterPro" id="IPR036935">
    <property type="entry name" value="Ribosomal_bL9_N_sf"/>
</dbReference>
<dbReference type="NCBIfam" id="TIGR00158">
    <property type="entry name" value="L9"/>
    <property type="match status" value="1"/>
</dbReference>
<dbReference type="PANTHER" id="PTHR21368">
    <property type="entry name" value="50S RIBOSOMAL PROTEIN L9"/>
    <property type="match status" value="1"/>
</dbReference>
<dbReference type="Pfam" id="PF03948">
    <property type="entry name" value="Ribosomal_L9_C"/>
    <property type="match status" value="1"/>
</dbReference>
<dbReference type="Pfam" id="PF01281">
    <property type="entry name" value="Ribosomal_L9_N"/>
    <property type="match status" value="1"/>
</dbReference>
<dbReference type="SUPFAM" id="SSF55658">
    <property type="entry name" value="L9 N-domain-like"/>
    <property type="match status" value="1"/>
</dbReference>
<dbReference type="SUPFAM" id="SSF55653">
    <property type="entry name" value="Ribosomal protein L9 C-domain"/>
    <property type="match status" value="1"/>
</dbReference>
<keyword id="KW-0687">Ribonucleoprotein</keyword>
<keyword id="KW-0689">Ribosomal protein</keyword>
<keyword id="KW-0694">RNA-binding</keyword>
<keyword id="KW-0699">rRNA-binding</keyword>
<organism>
    <name type="scientific">Flavobacterium johnsoniae (strain ATCC 17061 / DSM 2064 / JCM 8514 / BCRC 14874 / CCUG 350202 / NBRC 14942 / NCIMB 11054 / UW101)</name>
    <name type="common">Cytophaga johnsonae</name>
    <dbReference type="NCBI Taxonomy" id="376686"/>
    <lineage>
        <taxon>Bacteria</taxon>
        <taxon>Pseudomonadati</taxon>
        <taxon>Bacteroidota</taxon>
        <taxon>Flavobacteriia</taxon>
        <taxon>Flavobacteriales</taxon>
        <taxon>Flavobacteriaceae</taxon>
        <taxon>Flavobacterium</taxon>
    </lineage>
</organism>
<reference key="1">
    <citation type="journal article" date="2009" name="Appl. Environ. Microbiol.">
        <title>Novel features of the polysaccharide-digesting gliding bacterium Flavobacterium johnsoniae as revealed by genome sequence analysis.</title>
        <authorList>
            <person name="McBride M.J."/>
            <person name="Xie G."/>
            <person name="Martens E.C."/>
            <person name="Lapidus A."/>
            <person name="Henrissat B."/>
            <person name="Rhodes R.G."/>
            <person name="Goltsman E."/>
            <person name="Wang W."/>
            <person name="Xu J."/>
            <person name="Hunnicutt D.W."/>
            <person name="Staroscik A.M."/>
            <person name="Hoover T.R."/>
            <person name="Cheng Y.Q."/>
            <person name="Stein J.L."/>
        </authorList>
    </citation>
    <scope>NUCLEOTIDE SEQUENCE [LARGE SCALE GENOMIC DNA]</scope>
    <source>
        <strain>ATCC 17061 / DSM 2064 / JCM 8514 / BCRC 14874 / CCUG 350202 / NBRC 14942 / NCIMB 11054 / UW101</strain>
    </source>
</reference>
<sequence>MEIILKQDVQNLGFKDDVVSVKPGYGRNFLIPQGFATLATPSAKKVLAENLKQRAHKEAKIVADAKALAETLKALEIKLTAKAGGEKLFGSITNIDIAEALEKSGNAIDRKFITSGVVKRIGKYNATVRLHRDVIVELPYEIVAEK</sequence>
<protein>
    <recommendedName>
        <fullName evidence="1">Large ribosomal subunit protein bL9</fullName>
    </recommendedName>
    <alternativeName>
        <fullName evidence="2">50S ribosomal protein L9</fullName>
    </alternativeName>
</protein>
<accession>A5FE75</accession>